<gene>
    <name type="ordered locus">BF4021</name>
</gene>
<organism>
    <name type="scientific">Bacteroides fragilis (strain YCH46)</name>
    <dbReference type="NCBI Taxonomy" id="295405"/>
    <lineage>
        <taxon>Bacteria</taxon>
        <taxon>Pseudomonadati</taxon>
        <taxon>Bacteroidota</taxon>
        <taxon>Bacteroidia</taxon>
        <taxon>Bacteroidales</taxon>
        <taxon>Bacteroidaceae</taxon>
        <taxon>Bacteroides</taxon>
    </lineage>
</organism>
<name>Y4021_BACFR</name>
<reference key="1">
    <citation type="journal article" date="2004" name="Proc. Natl. Acad. Sci. U.S.A.">
        <title>Genomic analysis of Bacteroides fragilis reveals extensive DNA inversions regulating cell surface adaptation.</title>
        <authorList>
            <person name="Kuwahara T."/>
            <person name="Yamashita A."/>
            <person name="Hirakawa H."/>
            <person name="Nakayama H."/>
            <person name="Toh H."/>
            <person name="Okada N."/>
            <person name="Kuhara S."/>
            <person name="Hattori M."/>
            <person name="Hayashi T."/>
            <person name="Ohnishi Y."/>
        </authorList>
    </citation>
    <scope>NUCLEOTIDE SEQUENCE [LARGE SCALE GENOMIC DNA]</scope>
    <source>
        <strain>YCH46</strain>
    </source>
</reference>
<accession>Q64P19</accession>
<evidence type="ECO:0000255" key="1">
    <source>
        <dbReference type="HAMAP-Rule" id="MF_00652"/>
    </source>
</evidence>
<evidence type="ECO:0000305" key="2"/>
<sequence>MLILLSCAKTMSDVSKTKTPLTTFPGFRKEAAEVALQMSQFSVEELERLLKVNPKIAVENYRRYQAFHSEGTRELPALLAYTGIVFKRVHPQDFSEEDFCYAQDHLRLTSFCYGVLRPLDMIRPYRLEGDVRLPEPGNRTMFDYWKPILTDRFIADIKKVGGVLCNLASDEMRGLFDWKRVEKEVRVITPEFHVWKNGKLATVVVYTKMSRGEMTRYILKNRIESVEQLKTFAWEGFEFNEQLSDETKYVFTNGKTE</sequence>
<proteinExistence type="inferred from homology"/>
<feature type="chain" id="PRO_0000261997" description="UPF0246 protein BF4021">
    <location>
        <begin position="1"/>
        <end position="257"/>
    </location>
</feature>
<protein>
    <recommendedName>
        <fullName evidence="1">UPF0246 protein BF4021</fullName>
    </recommendedName>
</protein>
<comment type="similarity">
    <text evidence="1">Belongs to the UPF0246 family.</text>
</comment>
<comment type="sequence caution" evidence="2">
    <conflict type="erroneous initiation">
        <sequence resource="EMBL-CDS" id="BAD50763"/>
    </conflict>
</comment>
<dbReference type="EMBL" id="AP006841">
    <property type="protein sequence ID" value="BAD50763.1"/>
    <property type="status" value="ALT_INIT"/>
    <property type="molecule type" value="Genomic_DNA"/>
</dbReference>
<dbReference type="RefSeq" id="YP_101297.1">
    <property type="nucleotide sequence ID" value="NC_006347.1"/>
</dbReference>
<dbReference type="SMR" id="Q64P19"/>
<dbReference type="STRING" id="295405.BF4021"/>
<dbReference type="KEGG" id="bfr:BF4021"/>
<dbReference type="PATRIC" id="fig|295405.11.peg.3870"/>
<dbReference type="HOGENOM" id="CLU_061989_0_1_10"/>
<dbReference type="OrthoDB" id="9777133at2"/>
<dbReference type="Proteomes" id="UP000002197">
    <property type="component" value="Chromosome"/>
</dbReference>
<dbReference type="GO" id="GO:0005829">
    <property type="term" value="C:cytosol"/>
    <property type="evidence" value="ECO:0007669"/>
    <property type="project" value="TreeGrafter"/>
</dbReference>
<dbReference type="GO" id="GO:0033194">
    <property type="term" value="P:response to hydroperoxide"/>
    <property type="evidence" value="ECO:0007669"/>
    <property type="project" value="TreeGrafter"/>
</dbReference>
<dbReference type="HAMAP" id="MF_00652">
    <property type="entry name" value="UPF0246"/>
    <property type="match status" value="1"/>
</dbReference>
<dbReference type="InterPro" id="IPR005583">
    <property type="entry name" value="YaaA"/>
</dbReference>
<dbReference type="NCBIfam" id="NF002547">
    <property type="entry name" value="PRK02101.2-5"/>
    <property type="match status" value="1"/>
</dbReference>
<dbReference type="PANTHER" id="PTHR30283:SF4">
    <property type="entry name" value="PEROXIDE STRESS RESISTANCE PROTEIN YAAA"/>
    <property type="match status" value="1"/>
</dbReference>
<dbReference type="PANTHER" id="PTHR30283">
    <property type="entry name" value="PEROXIDE STRESS RESPONSE PROTEIN YAAA"/>
    <property type="match status" value="1"/>
</dbReference>
<dbReference type="Pfam" id="PF03883">
    <property type="entry name" value="H2O2_YaaD"/>
    <property type="match status" value="1"/>
</dbReference>